<gene>
    <name evidence="1" type="primary">mutL</name>
    <name type="ordered locus">Lreu_0526</name>
</gene>
<name>MUTL_LIMRD</name>
<feature type="chain" id="PRO_1000058145" description="DNA mismatch repair protein MutL">
    <location>
        <begin position="1"/>
        <end position="668"/>
    </location>
</feature>
<organism>
    <name type="scientific">Limosilactobacillus reuteri (strain DSM 20016)</name>
    <name type="common">Lactobacillus reuteri</name>
    <dbReference type="NCBI Taxonomy" id="557436"/>
    <lineage>
        <taxon>Bacteria</taxon>
        <taxon>Bacillati</taxon>
        <taxon>Bacillota</taxon>
        <taxon>Bacilli</taxon>
        <taxon>Lactobacillales</taxon>
        <taxon>Lactobacillaceae</taxon>
        <taxon>Limosilactobacillus</taxon>
    </lineage>
</organism>
<reference key="1">
    <citation type="journal article" date="2011" name="PLoS Genet.">
        <title>The evolution of host specialization in the vertebrate gut symbiont Lactobacillus reuteri.</title>
        <authorList>
            <person name="Frese S.A."/>
            <person name="Benson A.K."/>
            <person name="Tannock G.W."/>
            <person name="Loach D.M."/>
            <person name="Kim J."/>
            <person name="Zhang M."/>
            <person name="Oh P.L."/>
            <person name="Heng N.C."/>
            <person name="Patil P.B."/>
            <person name="Juge N."/>
            <person name="Mackenzie D.A."/>
            <person name="Pearson B.M."/>
            <person name="Lapidus A."/>
            <person name="Dalin E."/>
            <person name="Tice H."/>
            <person name="Goltsman E."/>
            <person name="Land M."/>
            <person name="Hauser L."/>
            <person name="Ivanova N."/>
            <person name="Kyrpides N.C."/>
            <person name="Walter J."/>
        </authorList>
    </citation>
    <scope>NUCLEOTIDE SEQUENCE [LARGE SCALE GENOMIC DNA]</scope>
    <source>
        <strain>DSM 20016</strain>
    </source>
</reference>
<accession>A5VIX0</accession>
<protein>
    <recommendedName>
        <fullName evidence="1">DNA mismatch repair protein MutL</fullName>
    </recommendedName>
</protein>
<comment type="function">
    <text evidence="1">This protein is involved in the repair of mismatches in DNA. It is required for dam-dependent methyl-directed DNA mismatch repair. May act as a 'molecular matchmaker', a protein that promotes the formation of a stable complex between two or more DNA-binding proteins in an ATP-dependent manner without itself being part of a final effector complex.</text>
</comment>
<comment type="similarity">
    <text evidence="1">Belongs to the DNA mismatch repair MutL/HexB family.</text>
</comment>
<sequence>MGKIHELDNILANQIAAGEVIERPASIVKELVENSLDAHSHRVDIIVENSGLDSVRVIDDGDGIAAEDISLAFHRHATSKINSRHDLFKVQTMGFRGEALPSIASVADVTLTTAQAGQEEGTMIHLRGGKELVVKPAGARQGTDIKVTDLFFNTPARLKYLKSPQTELTRITDIINRLALANPAVAFSFTHNGRELFRSAGNNNLQQVVAAIYGVQAGRKMLEISGADDDFKVSGFVSLPELTRASRQYITITINHRYIRNFELTKAIIQGYESKLMVGRYPIAVINIDLDPVLVDVNVHPAKREVRLSKEQQLIKLIAETIRQRIAVENLIPDVDADQFIPNDDEVADLDRRLKEASPVYHAAPISAVPATEKAATEIPTPEADNPAHADALDSEIPAPIVIHHLEDLNTPAMQKFDERYQNEGEVTPFSAPVPTMTKKPVKPANIELDVHDKQDQQQNRFPDLQYIGQLQGTFLLAQAGDGLYIVDQHAAQERINYEYYRQKIGEVSADQQNFLVPLVLNYSTVDAMTINQHLDTLAAVGLELESFGQNSFILRSHPTWFKEGQEEDTAEEMIDWLIKNGKLTVKEFRMKTAIMMSCKRAIKANHHLDEREAKALLKRLPQCENPFNCPHGRPVTVHFNDQDLEKMFKRIQDSHTPYADDFDDHEF</sequence>
<keyword id="KW-0227">DNA damage</keyword>
<keyword id="KW-0234">DNA repair</keyword>
<keyword id="KW-1185">Reference proteome</keyword>
<proteinExistence type="inferred from homology"/>
<evidence type="ECO:0000255" key="1">
    <source>
        <dbReference type="HAMAP-Rule" id="MF_00149"/>
    </source>
</evidence>
<dbReference type="EMBL" id="CP000705">
    <property type="protein sequence ID" value="ABQ82794.1"/>
    <property type="molecule type" value="Genomic_DNA"/>
</dbReference>
<dbReference type="RefSeq" id="WP_003667624.1">
    <property type="nucleotide sequence ID" value="NC_009513.1"/>
</dbReference>
<dbReference type="SMR" id="A5VIX0"/>
<dbReference type="STRING" id="557436.Lreu_0526"/>
<dbReference type="KEGG" id="lre:Lreu_0526"/>
<dbReference type="PATRIC" id="fig|557436.17.peg.1806"/>
<dbReference type="eggNOG" id="COG0323">
    <property type="taxonomic scope" value="Bacteria"/>
</dbReference>
<dbReference type="HOGENOM" id="CLU_004131_4_1_9"/>
<dbReference type="Proteomes" id="UP000001991">
    <property type="component" value="Chromosome"/>
</dbReference>
<dbReference type="GO" id="GO:0032300">
    <property type="term" value="C:mismatch repair complex"/>
    <property type="evidence" value="ECO:0007669"/>
    <property type="project" value="InterPro"/>
</dbReference>
<dbReference type="GO" id="GO:0005524">
    <property type="term" value="F:ATP binding"/>
    <property type="evidence" value="ECO:0007669"/>
    <property type="project" value="InterPro"/>
</dbReference>
<dbReference type="GO" id="GO:0016887">
    <property type="term" value="F:ATP hydrolysis activity"/>
    <property type="evidence" value="ECO:0007669"/>
    <property type="project" value="InterPro"/>
</dbReference>
<dbReference type="GO" id="GO:0140664">
    <property type="term" value="F:ATP-dependent DNA damage sensor activity"/>
    <property type="evidence" value="ECO:0007669"/>
    <property type="project" value="InterPro"/>
</dbReference>
<dbReference type="GO" id="GO:0030983">
    <property type="term" value="F:mismatched DNA binding"/>
    <property type="evidence" value="ECO:0007669"/>
    <property type="project" value="InterPro"/>
</dbReference>
<dbReference type="GO" id="GO:0006298">
    <property type="term" value="P:mismatch repair"/>
    <property type="evidence" value="ECO:0007669"/>
    <property type="project" value="UniProtKB-UniRule"/>
</dbReference>
<dbReference type="CDD" id="cd16926">
    <property type="entry name" value="HATPase_MutL-MLH-PMS-like"/>
    <property type="match status" value="1"/>
</dbReference>
<dbReference type="CDD" id="cd00782">
    <property type="entry name" value="MutL_Trans"/>
    <property type="match status" value="1"/>
</dbReference>
<dbReference type="FunFam" id="3.30.565.10:FF:000003">
    <property type="entry name" value="DNA mismatch repair endonuclease MutL"/>
    <property type="match status" value="1"/>
</dbReference>
<dbReference type="Gene3D" id="3.30.230.10">
    <property type="match status" value="1"/>
</dbReference>
<dbReference type="Gene3D" id="3.30.565.10">
    <property type="entry name" value="Histidine kinase-like ATPase, C-terminal domain"/>
    <property type="match status" value="1"/>
</dbReference>
<dbReference type="Gene3D" id="3.30.1540.20">
    <property type="entry name" value="MutL, C-terminal domain, dimerisation subdomain"/>
    <property type="match status" value="1"/>
</dbReference>
<dbReference type="Gene3D" id="3.30.1370.100">
    <property type="entry name" value="MutL, C-terminal domain, regulatory subdomain"/>
    <property type="match status" value="1"/>
</dbReference>
<dbReference type="HAMAP" id="MF_00149">
    <property type="entry name" value="DNA_mis_repair"/>
    <property type="match status" value="1"/>
</dbReference>
<dbReference type="InterPro" id="IPR014762">
    <property type="entry name" value="DNA_mismatch_repair_CS"/>
</dbReference>
<dbReference type="InterPro" id="IPR020667">
    <property type="entry name" value="DNA_mismatch_repair_MutL"/>
</dbReference>
<dbReference type="InterPro" id="IPR013507">
    <property type="entry name" value="DNA_mismatch_S5_2-like"/>
</dbReference>
<dbReference type="InterPro" id="IPR036890">
    <property type="entry name" value="HATPase_C_sf"/>
</dbReference>
<dbReference type="InterPro" id="IPR002099">
    <property type="entry name" value="MutL/Mlh/PMS"/>
</dbReference>
<dbReference type="InterPro" id="IPR038973">
    <property type="entry name" value="MutL/Mlh/Pms-like"/>
</dbReference>
<dbReference type="InterPro" id="IPR014790">
    <property type="entry name" value="MutL_C"/>
</dbReference>
<dbReference type="InterPro" id="IPR042120">
    <property type="entry name" value="MutL_C_dimsub"/>
</dbReference>
<dbReference type="InterPro" id="IPR042121">
    <property type="entry name" value="MutL_C_regsub"/>
</dbReference>
<dbReference type="InterPro" id="IPR037198">
    <property type="entry name" value="MutL_C_sf"/>
</dbReference>
<dbReference type="InterPro" id="IPR020568">
    <property type="entry name" value="Ribosomal_Su5_D2-typ_SF"/>
</dbReference>
<dbReference type="InterPro" id="IPR014721">
    <property type="entry name" value="Ribsml_uS5_D2-typ_fold_subgr"/>
</dbReference>
<dbReference type="NCBIfam" id="TIGR00585">
    <property type="entry name" value="mutl"/>
    <property type="match status" value="1"/>
</dbReference>
<dbReference type="NCBIfam" id="NF000950">
    <property type="entry name" value="PRK00095.1-3"/>
    <property type="match status" value="1"/>
</dbReference>
<dbReference type="PANTHER" id="PTHR10073">
    <property type="entry name" value="DNA MISMATCH REPAIR PROTEIN MLH, PMS, MUTL"/>
    <property type="match status" value="1"/>
</dbReference>
<dbReference type="PANTHER" id="PTHR10073:SF12">
    <property type="entry name" value="DNA MISMATCH REPAIR PROTEIN MLH1"/>
    <property type="match status" value="1"/>
</dbReference>
<dbReference type="Pfam" id="PF01119">
    <property type="entry name" value="DNA_mis_repair"/>
    <property type="match status" value="1"/>
</dbReference>
<dbReference type="Pfam" id="PF13589">
    <property type="entry name" value="HATPase_c_3"/>
    <property type="match status" value="1"/>
</dbReference>
<dbReference type="Pfam" id="PF08676">
    <property type="entry name" value="MutL_C"/>
    <property type="match status" value="1"/>
</dbReference>
<dbReference type="SMART" id="SM01340">
    <property type="entry name" value="DNA_mis_repair"/>
    <property type="match status" value="1"/>
</dbReference>
<dbReference type="SMART" id="SM00853">
    <property type="entry name" value="MutL_C"/>
    <property type="match status" value="1"/>
</dbReference>
<dbReference type="SUPFAM" id="SSF55874">
    <property type="entry name" value="ATPase domain of HSP90 chaperone/DNA topoisomerase II/histidine kinase"/>
    <property type="match status" value="1"/>
</dbReference>
<dbReference type="SUPFAM" id="SSF118116">
    <property type="entry name" value="DNA mismatch repair protein MutL"/>
    <property type="match status" value="1"/>
</dbReference>
<dbReference type="SUPFAM" id="SSF54211">
    <property type="entry name" value="Ribosomal protein S5 domain 2-like"/>
    <property type="match status" value="1"/>
</dbReference>
<dbReference type="PROSITE" id="PS00058">
    <property type="entry name" value="DNA_MISMATCH_REPAIR_1"/>
    <property type="match status" value="1"/>
</dbReference>